<keyword id="KW-0560">Oxidoreductase</keyword>
<reference key="1">
    <citation type="journal article" date="2004" name="Proc. Natl. Acad. Sci. U.S.A.">
        <title>Complete genomes of two clinical Staphylococcus aureus strains: evidence for the rapid evolution of virulence and drug resistance.</title>
        <authorList>
            <person name="Holden M.T.G."/>
            <person name="Feil E.J."/>
            <person name="Lindsay J.A."/>
            <person name="Peacock S.J."/>
            <person name="Day N.P.J."/>
            <person name="Enright M.C."/>
            <person name="Foster T.J."/>
            <person name="Moore C.E."/>
            <person name="Hurst L."/>
            <person name="Atkin R."/>
            <person name="Barron A."/>
            <person name="Bason N."/>
            <person name="Bentley S.D."/>
            <person name="Chillingworth C."/>
            <person name="Chillingworth T."/>
            <person name="Churcher C."/>
            <person name="Clark L."/>
            <person name="Corton C."/>
            <person name="Cronin A."/>
            <person name="Doggett J."/>
            <person name="Dowd L."/>
            <person name="Feltwell T."/>
            <person name="Hance Z."/>
            <person name="Harris B."/>
            <person name="Hauser H."/>
            <person name="Holroyd S."/>
            <person name="Jagels K."/>
            <person name="James K.D."/>
            <person name="Lennard N."/>
            <person name="Line A."/>
            <person name="Mayes R."/>
            <person name="Moule S."/>
            <person name="Mungall K."/>
            <person name="Ormond D."/>
            <person name="Quail M.A."/>
            <person name="Rabbinowitsch E."/>
            <person name="Rutherford K.M."/>
            <person name="Sanders M."/>
            <person name="Sharp S."/>
            <person name="Simmonds M."/>
            <person name="Stevens K."/>
            <person name="Whitehead S."/>
            <person name="Barrell B.G."/>
            <person name="Spratt B.G."/>
            <person name="Parkhill J."/>
        </authorList>
    </citation>
    <scope>NUCLEOTIDE SEQUENCE [LARGE SCALE GENOMIC DNA]</scope>
    <source>
        <strain>MSSA476</strain>
    </source>
</reference>
<accession>Q6G930</accession>
<evidence type="ECO:0000255" key="1">
    <source>
        <dbReference type="HAMAP-Rule" id="MF_00712"/>
    </source>
</evidence>
<feature type="chain" id="PRO_0000166974" description="Probable glycine dehydrogenase (decarboxylating) subunit 1">
    <location>
        <begin position="1"/>
        <end position="451"/>
    </location>
</feature>
<proteinExistence type="inferred from homology"/>
<dbReference type="EC" id="1.4.4.2" evidence="1"/>
<dbReference type="EMBL" id="BX571857">
    <property type="protein sequence ID" value="CAG43269.1"/>
    <property type="molecule type" value="Genomic_DNA"/>
</dbReference>
<dbReference type="SMR" id="Q6G930"/>
<dbReference type="KEGG" id="sas:SAS1474"/>
<dbReference type="HOGENOM" id="CLU_004620_0_2_9"/>
<dbReference type="GO" id="GO:0004375">
    <property type="term" value="F:glycine dehydrogenase (decarboxylating) activity"/>
    <property type="evidence" value="ECO:0007669"/>
    <property type="project" value="UniProtKB-EC"/>
</dbReference>
<dbReference type="GO" id="GO:0019464">
    <property type="term" value="P:glycine decarboxylation via glycine cleavage system"/>
    <property type="evidence" value="ECO:0007669"/>
    <property type="project" value="UniProtKB-UniRule"/>
</dbReference>
<dbReference type="GO" id="GO:0009116">
    <property type="term" value="P:nucleoside metabolic process"/>
    <property type="evidence" value="ECO:0007669"/>
    <property type="project" value="InterPro"/>
</dbReference>
<dbReference type="CDD" id="cd00613">
    <property type="entry name" value="GDC-P"/>
    <property type="match status" value="1"/>
</dbReference>
<dbReference type="Gene3D" id="3.90.1150.10">
    <property type="entry name" value="Aspartate Aminotransferase, domain 1"/>
    <property type="match status" value="1"/>
</dbReference>
<dbReference type="Gene3D" id="3.40.640.10">
    <property type="entry name" value="Type I PLP-dependent aspartate aminotransferase-like (Major domain)"/>
    <property type="match status" value="1"/>
</dbReference>
<dbReference type="HAMAP" id="MF_00712">
    <property type="entry name" value="GcvPA"/>
    <property type="match status" value="1"/>
</dbReference>
<dbReference type="InterPro" id="IPR023010">
    <property type="entry name" value="GcvPA"/>
</dbReference>
<dbReference type="InterPro" id="IPR049315">
    <property type="entry name" value="GDC-P_N"/>
</dbReference>
<dbReference type="InterPro" id="IPR020581">
    <property type="entry name" value="GDC_P"/>
</dbReference>
<dbReference type="InterPro" id="IPR015424">
    <property type="entry name" value="PyrdxlP-dep_Trfase"/>
</dbReference>
<dbReference type="InterPro" id="IPR015421">
    <property type="entry name" value="PyrdxlP-dep_Trfase_major"/>
</dbReference>
<dbReference type="InterPro" id="IPR015422">
    <property type="entry name" value="PyrdxlP-dep_Trfase_small"/>
</dbReference>
<dbReference type="NCBIfam" id="NF001696">
    <property type="entry name" value="PRK00451.1"/>
    <property type="match status" value="1"/>
</dbReference>
<dbReference type="PANTHER" id="PTHR42806">
    <property type="entry name" value="GLYCINE CLEAVAGE SYSTEM P-PROTEIN"/>
    <property type="match status" value="1"/>
</dbReference>
<dbReference type="PANTHER" id="PTHR42806:SF1">
    <property type="entry name" value="GLYCINE DEHYDROGENASE (DECARBOXYLATING)"/>
    <property type="match status" value="1"/>
</dbReference>
<dbReference type="Pfam" id="PF02347">
    <property type="entry name" value="GDC-P"/>
    <property type="match status" value="1"/>
</dbReference>
<dbReference type="PIRSF" id="PIRSF006815">
    <property type="entry name" value="GcvPA"/>
    <property type="match status" value="1"/>
</dbReference>
<dbReference type="SUPFAM" id="SSF53383">
    <property type="entry name" value="PLP-dependent transferases"/>
    <property type="match status" value="1"/>
</dbReference>
<protein>
    <recommendedName>
        <fullName evidence="1">Probable glycine dehydrogenase (decarboxylating) subunit 1</fullName>
        <ecNumber evidence="1">1.4.4.2</ecNumber>
    </recommendedName>
    <alternativeName>
        <fullName evidence="1">Glycine cleavage system P-protein subunit 1</fullName>
    </alternativeName>
    <alternativeName>
        <fullName evidence="1">Glycine decarboxylase subunit 1</fullName>
    </alternativeName>
    <alternativeName>
        <fullName evidence="1">Glycine dehydrogenase (aminomethyl-transferring) subunit 1</fullName>
    </alternativeName>
</protein>
<comment type="function">
    <text evidence="1">The glycine cleavage system catalyzes the degradation of glycine. The P protein binds the alpha-amino group of glycine through its pyridoxal phosphate cofactor; CO(2) is released and the remaining methylamine moiety is then transferred to the lipoamide cofactor of the H protein.</text>
</comment>
<comment type="catalytic activity">
    <reaction evidence="1">
        <text>N(6)-[(R)-lipoyl]-L-lysyl-[glycine-cleavage complex H protein] + glycine + H(+) = N(6)-[(R)-S(8)-aminomethyldihydrolipoyl]-L-lysyl-[glycine-cleavage complex H protein] + CO2</text>
        <dbReference type="Rhea" id="RHEA:24304"/>
        <dbReference type="Rhea" id="RHEA-COMP:10494"/>
        <dbReference type="Rhea" id="RHEA-COMP:10495"/>
        <dbReference type="ChEBI" id="CHEBI:15378"/>
        <dbReference type="ChEBI" id="CHEBI:16526"/>
        <dbReference type="ChEBI" id="CHEBI:57305"/>
        <dbReference type="ChEBI" id="CHEBI:83099"/>
        <dbReference type="ChEBI" id="CHEBI:83143"/>
        <dbReference type="EC" id="1.4.4.2"/>
    </reaction>
</comment>
<comment type="subunit">
    <text evidence="1">The glycine cleavage system is composed of four proteins: P, T, L and H. In this organism, the P 'protein' is a heterodimer of two subunits.</text>
</comment>
<comment type="similarity">
    <text evidence="1">Belongs to the GcvP family. N-terminal subunit subfamily.</text>
</comment>
<gene>
    <name evidence="1" type="primary">gcvPA</name>
    <name type="ordered locus">SAS1474</name>
</gene>
<organism>
    <name type="scientific">Staphylococcus aureus (strain MSSA476)</name>
    <dbReference type="NCBI Taxonomy" id="282459"/>
    <lineage>
        <taxon>Bacteria</taxon>
        <taxon>Bacillati</taxon>
        <taxon>Bacillota</taxon>
        <taxon>Bacilli</taxon>
        <taxon>Bacillales</taxon>
        <taxon>Staphylococcaceae</taxon>
        <taxon>Staphylococcus</taxon>
    </lineage>
</organism>
<sequence>MCIVSHRYIPLTEKDKQEMLQTIGAKSIGELFGDVPSDILLNRDLNIAEGEAETTLLRRLNRIASKNITKETHTSFLGAGVYDHYAPSVVDAMISRSEFYTAYTPYQPEISQGELQAIFEFQTLICELTDMDVANSSMYDGMTSFAEACILAFSQTKKNKIVVSKGLHYQALQVLHTYAKTRKEFEVVEIDLDGTVTDLKKLEAAVDDETAAVAVQYPNFYGSIEDLEKIHSFIEDKKALFIVYANPLALGLLTPPGSFGADIVVGDTQPFGIPAQFGGPHCGYFATTKKLMRKVPGRLVGQTQDDEGNRGFVLTLQAREQHIRRDKATSNICSNQALNALASSIAMSALGKQGIYDIAVQNIEHANYAKQQFIKKGFEVLDGTSFNEFVVKFDKPIQQVNEELVKYNIIGGFDLGVVSDDFKNHMLIAVTELRTKDEIDTFVEKAGELND</sequence>
<name>GCSPA_STAAS</name>